<organism>
    <name type="scientific">Oryza sativa subsp. japonica</name>
    <name type="common">Rice</name>
    <dbReference type="NCBI Taxonomy" id="39947"/>
    <lineage>
        <taxon>Eukaryota</taxon>
        <taxon>Viridiplantae</taxon>
        <taxon>Streptophyta</taxon>
        <taxon>Embryophyta</taxon>
        <taxon>Tracheophyta</taxon>
        <taxon>Spermatophyta</taxon>
        <taxon>Magnoliopsida</taxon>
        <taxon>Liliopsida</taxon>
        <taxon>Poales</taxon>
        <taxon>Poaceae</taxon>
        <taxon>BOP clade</taxon>
        <taxon>Oryzoideae</taxon>
        <taxon>Oryzeae</taxon>
        <taxon>Oryzinae</taxon>
        <taxon>Oryza</taxon>
        <taxon>Oryza sativa</taxon>
    </lineage>
</organism>
<feature type="transit peptide" description="Chloroplast" evidence="2">
    <location>
        <begin position="1"/>
        <end position="52"/>
    </location>
</feature>
<feature type="chain" id="PRO_0000395203" description="Ferredoxin-dependent glutamate synthase, chloroplastic">
    <location>
        <begin position="53"/>
        <end position="1615"/>
    </location>
</feature>
<feature type="domain" description="Glutamine amidotransferase type-2" evidence="3">
    <location>
        <begin position="97"/>
        <end position="496"/>
    </location>
</feature>
<feature type="active site" description="Nucleophile" evidence="3">
    <location>
        <position position="97"/>
    </location>
</feature>
<feature type="binding site" evidence="1">
    <location>
        <begin position="1175"/>
        <end position="1232"/>
    </location>
    <ligand>
        <name>FMN</name>
        <dbReference type="ChEBI" id="CHEBI:58210"/>
    </ligand>
</feature>
<feature type="binding site" evidence="1">
    <location>
        <position position="1228"/>
    </location>
    <ligand>
        <name>[3Fe-4S] cluster</name>
        <dbReference type="ChEBI" id="CHEBI:21137"/>
    </ligand>
</feature>
<feature type="binding site" evidence="1">
    <location>
        <position position="1234"/>
    </location>
    <ligand>
        <name>[3Fe-4S] cluster</name>
        <dbReference type="ChEBI" id="CHEBI:21137"/>
    </ligand>
</feature>
<feature type="binding site" evidence="1">
    <location>
        <position position="1239"/>
    </location>
    <ligand>
        <name>[3Fe-4S] cluster</name>
        <dbReference type="ChEBI" id="CHEBI:21137"/>
    </ligand>
</feature>
<feature type="sequence conflict" description="In Ref. 1; BAF46922." evidence="5" ref="1">
    <original>P</original>
    <variation>A</variation>
    <location>
        <position position="1588"/>
    </location>
</feature>
<reference key="1">
    <citation type="journal article" date="2003" name="Plant Biotechnol.">
        <title>Organization and structure of ferredoxin-dependent glutamate synthase gene and intracellular localization of the enzyme protein in rice plants.</title>
        <authorList>
            <person name="Hayakawa T."/>
            <person name="Sakai T."/>
            <person name="Ishiyama K."/>
            <person name="Hirose N."/>
            <person name="Nakajima H."/>
            <person name="Takezawa M."/>
            <person name="Naito K."/>
            <person name="Hino-Nakayama M."/>
            <person name="Akagawa T."/>
            <person name="Goto S."/>
            <person name="Yamaya T."/>
        </authorList>
    </citation>
    <scope>NUCLEOTIDE SEQUENCE [GENOMIC DNA / MRNA]</scope>
    <scope>SUBCELLULAR LOCATION</scope>
    <scope>TISSUE SPECIFICITY</scope>
    <source>
        <strain>cv. Sasanishiki</strain>
        <tissue>Root</tissue>
    </source>
</reference>
<reference key="2">
    <citation type="journal article" date="2005" name="Nature">
        <title>The map-based sequence of the rice genome.</title>
        <authorList>
            <consortium name="International rice genome sequencing project (IRGSP)"/>
        </authorList>
    </citation>
    <scope>NUCLEOTIDE SEQUENCE [LARGE SCALE GENOMIC DNA]</scope>
    <source>
        <strain>cv. Nipponbare</strain>
    </source>
</reference>
<reference key="3">
    <citation type="journal article" date="2008" name="Nucleic Acids Res.">
        <title>The rice annotation project database (RAP-DB): 2008 update.</title>
        <authorList>
            <consortium name="The rice annotation project (RAP)"/>
        </authorList>
    </citation>
    <scope>GENOME REANNOTATION</scope>
    <source>
        <strain>cv. Nipponbare</strain>
    </source>
</reference>
<reference key="4">
    <citation type="journal article" date="2013" name="Rice">
        <title>Improvement of the Oryza sativa Nipponbare reference genome using next generation sequence and optical map data.</title>
        <authorList>
            <person name="Kawahara Y."/>
            <person name="de la Bastide M."/>
            <person name="Hamilton J.P."/>
            <person name="Kanamori H."/>
            <person name="McCombie W.R."/>
            <person name="Ouyang S."/>
            <person name="Schwartz D.C."/>
            <person name="Tanaka T."/>
            <person name="Wu J."/>
            <person name="Zhou S."/>
            <person name="Childs K.L."/>
            <person name="Davidson R.M."/>
            <person name="Lin H."/>
            <person name="Quesada-Ocampo L."/>
            <person name="Vaillancourt B."/>
            <person name="Sakai H."/>
            <person name="Lee S.S."/>
            <person name="Kim J."/>
            <person name="Numa H."/>
            <person name="Itoh T."/>
            <person name="Buell C.R."/>
            <person name="Matsumoto T."/>
        </authorList>
    </citation>
    <scope>GENOME REANNOTATION</scope>
    <source>
        <strain>cv. Nipponbare</strain>
    </source>
</reference>
<protein>
    <recommendedName>
        <fullName>Ferredoxin-dependent glutamate synthase, chloroplastic</fullName>
        <ecNumber>1.4.7.1</ecNumber>
    </recommendedName>
    <alternativeName>
        <fullName>Fd-GOGAT</fullName>
    </alternativeName>
</protein>
<keyword id="KW-0003">3Fe-4S</keyword>
<keyword id="KW-0028">Amino-acid biosynthesis</keyword>
<keyword id="KW-0150">Chloroplast</keyword>
<keyword id="KW-0274">FAD</keyword>
<keyword id="KW-0285">Flavoprotein</keyword>
<keyword id="KW-0288">FMN</keyword>
<keyword id="KW-0314">Glutamate biosynthesis</keyword>
<keyword id="KW-0315">Glutamine amidotransferase</keyword>
<keyword id="KW-0408">Iron</keyword>
<keyword id="KW-0411">Iron-sulfur</keyword>
<keyword id="KW-0479">Metal-binding</keyword>
<keyword id="KW-0520">NAD</keyword>
<keyword id="KW-0560">Oxidoreductase</keyword>
<keyword id="KW-0934">Plastid</keyword>
<keyword id="KW-1185">Reference proteome</keyword>
<keyword id="KW-0809">Transit peptide</keyword>
<gene>
    <name type="primary">GLU</name>
    <name type="ordered locus">Os07g0658400</name>
    <name type="ordered locus">LOC_Os07g46460</name>
    <name type="ORF">OJ1477_F01.112</name>
    <name type="ORF">P0047B07.133</name>
</gene>
<proteinExistence type="evidence at transcript level"/>
<name>GLTB_ORYSJ</name>
<sequence length="1615" mass="175044">MATLPRAAAAAAPSPAAALLPLPRAAPLLAGRAAARSAARRLRARGTRAPPLAAARRGWGGVSPRAVLDLPRRREAAEKPAQKAADLNEILSERGACGVGFVANLKNEPSFNIVRDALVALGCMEHRGGCGADNDSGDGSGLMSGIPWDLFNDWANKQGLAPLDRTNTGVGMVFLPQDENSMEEAKAVVAKVFTDEGLEVLGWRTVPFNVSVVGRYAKETMPNIQQIFVKVAKEDNADDIERELYICRKLIERATKSASWADELYFCSLSSRTIVYKGMLRSEILGQFYLDLQNELYKSPFAIYHRRYSTNTSPRWPLAQPMRLLGHNGEINTIQGNLNWMRSREATLQSPVWRGREHEIRPFGDPKASDSANLDSTAELLLRSGRSPAEAMMILVPEAYKNHPTLSIKYPEVIDFYDYYKGQMEAWDGPALLLFSDGRTVGACLDRNGLRPARYWRTSDDFVYVASEVGVIPMDESKVVMKGRLGPGMMITVDLQTGQVLENTEVKKSVASANPYGSWLQQSTRSIKPVNFQSSVAMDNETVLRHQQAFGYSSEDVQMVIETMASQGKEPTFCMGDDIPLAVLSQKPHMLFDYFKQRFAQVTNPAIDPLREGLVMSLEVNIGKRRNILEVGPENADQVTLSSPVLNEGELESLLNDSKLKPKVLSTYFDIRKGLDGSLDKAIKVLCDEADAAVRNGSQLLVLSDRSEALEPTRPAIPILLAVGAIHQHLIQNGLRMSASIVADTAQCFSTHQFACLIGYGASAICPYLALETCRQWRLSNKTVNLMRNGKMPTVTIEQAQRNFIKAVKSGLLKILSKMGISLLSSYCGAQIFEIYGLGQEVVDLAFCGSVSKIGGLTLDELGRETLSFWVKAFSEDTAKRLENFGFIQSRPGGEYHANNPEMSKLLHKAVREKSDNAYTVYQQHLASRPVNVLRDLLELKSDRAPIPIGKVEPATSIVERFCTGGMSLGAISRETHEAIAIAMNRIGGKSNSGEGGEDPIRWSPLADVEDGYSPTLPHLKGLQNGDTATSAIKQVASGRFGVTPTFLVNAEQIEIKIAQGAKPGEGGQLPGKKVSAYIARLRNSKPGVPLISPPPHHDIYSIEDLAQLIYDLHQINPKAKVSVKLVAEAGIGTVASGVSKGNADIIQISGHDGGTGASPISSIKHAGGPWELGLSETHQTLIQNGLRERVVLRVDGGFRSGLDVLMAAAMGADEYGFGSVAMIATGCVMARICHTNNCPVGVASQREELRARFPGVPGDLVNYFLFVAEEVRATLAQLGFEKLDDIIGRTDILKAKHVSLAKTQHIDLKYLLSSAGLPKWSSSQIRSQDVHSNGPVLDETILADPDISDAIENEKEVSKTFQIYNVDRAVCGRVAGVIAKKYGDTGFAGQLNITFTGSAGQSFGCFLTPGMNIRLVGEANDYVGKGMAGGELVVVPVEKTGFVPEDAAIVGNTCLYGATGGQVFVRGKTGERFAVRNSLGQAVVEGTGDHCCEYMTGGCVVVLGKVGRNVAAGMTGGLAYILDEDDTLVPKVNKEIVKMQRVNAPAGQMQLKGLIEAYVEKTGSEKGATILREWEAYLPLFWQLVPPSEEDSPEACAEFERVLAKQATTVQSAK</sequence>
<accession>Q69RJ0</accession>
<accession>A2V654</accession>
<accession>A2V657</accession>
<accession>Q0D3Y9</accession>
<comment type="function">
    <text evidence="1">Involved in glutamate biosynthesis in leaf. Required for the reassimilation of ammonium ions generated during photorespiration (By similarity).</text>
</comment>
<comment type="catalytic activity">
    <reaction>
        <text>2 oxidized [2Fe-2S]-[ferredoxin] + 2 L-glutamate = L-glutamine + 2 reduced [2Fe-2S]-[ferredoxin] + 2-oxoglutarate + 2 H(+)</text>
        <dbReference type="Rhea" id="RHEA:12128"/>
        <dbReference type="Rhea" id="RHEA-COMP:10000"/>
        <dbReference type="Rhea" id="RHEA-COMP:10001"/>
        <dbReference type="ChEBI" id="CHEBI:15378"/>
        <dbReference type="ChEBI" id="CHEBI:16810"/>
        <dbReference type="ChEBI" id="CHEBI:29985"/>
        <dbReference type="ChEBI" id="CHEBI:33737"/>
        <dbReference type="ChEBI" id="CHEBI:33738"/>
        <dbReference type="ChEBI" id="CHEBI:58359"/>
        <dbReference type="EC" id="1.4.7.1"/>
    </reaction>
</comment>
<comment type="cofactor">
    <cofactor evidence="1">
        <name>[3Fe-4S] cluster</name>
        <dbReference type="ChEBI" id="CHEBI:21137"/>
    </cofactor>
    <text evidence="1">Binds 1 [3Fe-4S] cluster.</text>
</comment>
<comment type="cofactor">
    <cofactor evidence="1">
        <name>FAD</name>
        <dbReference type="ChEBI" id="CHEBI:57692"/>
    </cofactor>
</comment>
<comment type="cofactor">
    <cofactor evidence="1">
        <name>FMN</name>
        <dbReference type="ChEBI" id="CHEBI:58210"/>
    </cofactor>
</comment>
<comment type="pathway">
    <text>Amino-acid biosynthesis; L-glutamate biosynthesis via GLT pathway; L-glutamate from 2-oxoglutarate and L-glutamine (ferredoxin route): step 1/1.</text>
</comment>
<comment type="pathway">
    <text>Energy metabolism; nitrogen metabolism.</text>
</comment>
<comment type="subcellular location">
    <subcellularLocation>
        <location evidence="4">Plastid</location>
        <location evidence="4">Chloroplast</location>
    </subcellularLocation>
</comment>
<comment type="tissue specificity">
    <text evidence="4">Expressed in leaf blades and at lower levels in roots.</text>
</comment>
<comment type="similarity">
    <text evidence="5">Belongs to the glutamate synthase family.</text>
</comment>
<comment type="sequence caution" evidence="5">
    <conflict type="erroneous gene model prediction">
        <sequence resource="EMBL-CDS" id="BAD30339"/>
    </conflict>
</comment>
<comment type="sequence caution" evidence="5">
    <conflict type="erroneous gene model prediction">
        <sequence resource="EMBL-CDS" id="BAD31105"/>
    </conflict>
</comment>
<comment type="sequence caution" evidence="5">
    <conflict type="erroneous gene model prediction">
        <sequence resource="EMBL-CDS" id="BAF22434"/>
    </conflict>
</comment>
<evidence type="ECO:0000250" key="1"/>
<evidence type="ECO:0000255" key="2"/>
<evidence type="ECO:0000255" key="3">
    <source>
        <dbReference type="PROSITE-ProRule" id="PRU00609"/>
    </source>
</evidence>
<evidence type="ECO:0000269" key="4">
    <source ref="1"/>
</evidence>
<evidence type="ECO:0000305" key="5"/>
<dbReference type="EC" id="1.4.7.1"/>
<dbReference type="EMBL" id="AB024716">
    <property type="protein sequence ID" value="BAF46921.1"/>
    <property type="molecule type" value="mRNA"/>
</dbReference>
<dbReference type="EMBL" id="AB061357">
    <property type="protein sequence ID" value="BAF46922.1"/>
    <property type="molecule type" value="Genomic_DNA"/>
</dbReference>
<dbReference type="EMBL" id="AP003833">
    <property type="protein sequence ID" value="BAD30339.1"/>
    <property type="status" value="ALT_SEQ"/>
    <property type="molecule type" value="Genomic_DNA"/>
</dbReference>
<dbReference type="EMBL" id="AP005184">
    <property type="protein sequence ID" value="BAD31105.1"/>
    <property type="status" value="ALT_SEQ"/>
    <property type="molecule type" value="Genomic_DNA"/>
</dbReference>
<dbReference type="EMBL" id="AP008213">
    <property type="protein sequence ID" value="BAF22434.1"/>
    <property type="status" value="ALT_SEQ"/>
    <property type="molecule type" value="Genomic_DNA"/>
</dbReference>
<dbReference type="EMBL" id="AP014963">
    <property type="status" value="NOT_ANNOTATED_CDS"/>
    <property type="molecule type" value="Genomic_DNA"/>
</dbReference>
<dbReference type="RefSeq" id="XP_015646712.1">
    <property type="nucleotide sequence ID" value="XM_015791226.1"/>
</dbReference>
<dbReference type="SMR" id="Q69RJ0"/>
<dbReference type="FunCoup" id="Q69RJ0">
    <property type="interactions" value="584"/>
</dbReference>
<dbReference type="STRING" id="39947.Q69RJ0"/>
<dbReference type="PaxDb" id="39947-Q69RJ0"/>
<dbReference type="EnsemblPlants" id="Os07t0658400-02">
    <property type="protein sequence ID" value="Os07t0658400-02"/>
    <property type="gene ID" value="Os07g0658400"/>
</dbReference>
<dbReference type="Gramene" id="Os07t0658400-02">
    <property type="protein sequence ID" value="Os07t0658400-02"/>
    <property type="gene ID" value="Os07g0658400"/>
</dbReference>
<dbReference type="KEGG" id="dosa:Os07g0658400"/>
<dbReference type="eggNOG" id="KOG0399">
    <property type="taxonomic scope" value="Eukaryota"/>
</dbReference>
<dbReference type="HOGENOM" id="CLU_000422_12_0_1"/>
<dbReference type="InParanoid" id="Q69RJ0"/>
<dbReference type="OrthoDB" id="4327079at2759"/>
<dbReference type="BRENDA" id="1.4.7.1">
    <property type="organism ID" value="8948"/>
</dbReference>
<dbReference type="PlantReactome" id="R-OSA-1119420">
    <property type="pathway name" value="Glutamate biosynthesis V"/>
</dbReference>
<dbReference type="PlantReactome" id="R-OSA-1119443">
    <property type="pathway name" value="Ammonia assimilation cycle"/>
</dbReference>
<dbReference type="UniPathway" id="UPA00045"/>
<dbReference type="UniPathway" id="UPA00634">
    <property type="reaction ID" value="UER00691"/>
</dbReference>
<dbReference type="Proteomes" id="UP000000763">
    <property type="component" value="Chromosome 7"/>
</dbReference>
<dbReference type="Proteomes" id="UP000059680">
    <property type="component" value="Chromosome 7"/>
</dbReference>
<dbReference type="GO" id="GO:0009507">
    <property type="term" value="C:chloroplast"/>
    <property type="evidence" value="ECO:0007669"/>
    <property type="project" value="UniProtKB-SubCell"/>
</dbReference>
<dbReference type="GO" id="GO:0051538">
    <property type="term" value="F:3 iron, 4 sulfur cluster binding"/>
    <property type="evidence" value="ECO:0007669"/>
    <property type="project" value="UniProtKB-KW"/>
</dbReference>
<dbReference type="GO" id="GO:0016041">
    <property type="term" value="F:glutamate synthase (ferredoxin) activity"/>
    <property type="evidence" value="ECO:0007669"/>
    <property type="project" value="UniProtKB-EC"/>
</dbReference>
<dbReference type="GO" id="GO:0015930">
    <property type="term" value="F:glutamate synthase activity"/>
    <property type="evidence" value="ECO:0000318"/>
    <property type="project" value="GO_Central"/>
</dbReference>
<dbReference type="GO" id="GO:0046872">
    <property type="term" value="F:metal ion binding"/>
    <property type="evidence" value="ECO:0007669"/>
    <property type="project" value="UniProtKB-KW"/>
</dbReference>
<dbReference type="GO" id="GO:0019676">
    <property type="term" value="P:ammonia assimilation cycle"/>
    <property type="evidence" value="ECO:0000318"/>
    <property type="project" value="GO_Central"/>
</dbReference>
<dbReference type="GO" id="GO:0006537">
    <property type="term" value="P:glutamate biosynthetic process"/>
    <property type="evidence" value="ECO:0000318"/>
    <property type="project" value="GO_Central"/>
</dbReference>
<dbReference type="GO" id="GO:0097054">
    <property type="term" value="P:L-glutamate biosynthetic process"/>
    <property type="evidence" value="ECO:0007669"/>
    <property type="project" value="UniProtKB-UniPathway"/>
</dbReference>
<dbReference type="CDD" id="cd00982">
    <property type="entry name" value="gltB_C"/>
    <property type="match status" value="1"/>
</dbReference>
<dbReference type="CDD" id="cd00713">
    <property type="entry name" value="GltS"/>
    <property type="match status" value="1"/>
</dbReference>
<dbReference type="CDD" id="cd02808">
    <property type="entry name" value="GltS_FMN"/>
    <property type="match status" value="1"/>
</dbReference>
<dbReference type="FunFam" id="2.160.20.60:FF:000003">
    <property type="entry name" value="Ferredoxin-dependent glutamate synthase, chloroplastic"/>
    <property type="match status" value="1"/>
</dbReference>
<dbReference type="FunFam" id="3.20.20.70:FF:000084">
    <property type="entry name" value="Ferredoxin-dependent glutamate synthase, chloroplastic"/>
    <property type="match status" value="1"/>
</dbReference>
<dbReference type="FunFam" id="3.20.20.70:FF:000127">
    <property type="entry name" value="Ferredoxin-dependent glutamate synthase, chloroplastic"/>
    <property type="match status" value="1"/>
</dbReference>
<dbReference type="FunFam" id="3.60.20.10:FF:000096">
    <property type="entry name" value="Ferredoxin-dependent glutamate synthase, chloroplastic"/>
    <property type="match status" value="1"/>
</dbReference>
<dbReference type="Gene3D" id="3.20.20.70">
    <property type="entry name" value="Aldolase class I"/>
    <property type="match status" value="2"/>
</dbReference>
<dbReference type="Gene3D" id="2.160.20.60">
    <property type="entry name" value="Glutamate synthase, alpha subunit, C-terminal domain"/>
    <property type="match status" value="1"/>
</dbReference>
<dbReference type="Gene3D" id="3.60.20.10">
    <property type="entry name" value="Glutamine Phosphoribosylpyrophosphate, subunit 1, domain 1"/>
    <property type="match status" value="1"/>
</dbReference>
<dbReference type="InterPro" id="IPR013785">
    <property type="entry name" value="Aldolase_TIM"/>
</dbReference>
<dbReference type="InterPro" id="IPR050711">
    <property type="entry name" value="ET-N_metabolism_enzyme"/>
</dbReference>
<dbReference type="InterPro" id="IPR017932">
    <property type="entry name" value="GATase_2_dom"/>
</dbReference>
<dbReference type="InterPro" id="IPR002489">
    <property type="entry name" value="Glu_synth_asu_C"/>
</dbReference>
<dbReference type="InterPro" id="IPR036485">
    <property type="entry name" value="Glu_synth_asu_C_sf"/>
</dbReference>
<dbReference type="InterPro" id="IPR006982">
    <property type="entry name" value="Glu_synth_centr_N"/>
</dbReference>
<dbReference type="InterPro" id="IPR002932">
    <property type="entry name" value="Glu_synthdom"/>
</dbReference>
<dbReference type="InterPro" id="IPR029055">
    <property type="entry name" value="Ntn_hydrolases_N"/>
</dbReference>
<dbReference type="NCBIfam" id="NF008730">
    <property type="entry name" value="PRK11750.1"/>
    <property type="match status" value="1"/>
</dbReference>
<dbReference type="PANTHER" id="PTHR11938">
    <property type="entry name" value="FAD NADPH DEHYDROGENASE/OXIDOREDUCTASE"/>
    <property type="match status" value="1"/>
</dbReference>
<dbReference type="PANTHER" id="PTHR11938:SF133">
    <property type="entry name" value="GLUTAMATE SYNTHASE (NADH)"/>
    <property type="match status" value="1"/>
</dbReference>
<dbReference type="Pfam" id="PF00310">
    <property type="entry name" value="GATase_2"/>
    <property type="match status" value="1"/>
</dbReference>
<dbReference type="Pfam" id="PF04898">
    <property type="entry name" value="Glu_syn_central"/>
    <property type="match status" value="1"/>
</dbReference>
<dbReference type="Pfam" id="PF01645">
    <property type="entry name" value="Glu_synthase"/>
    <property type="match status" value="1"/>
</dbReference>
<dbReference type="Pfam" id="PF01493">
    <property type="entry name" value="GXGXG"/>
    <property type="match status" value="1"/>
</dbReference>
<dbReference type="SUPFAM" id="SSF69336">
    <property type="entry name" value="Alpha subunit of glutamate synthase, C-terminal domain"/>
    <property type="match status" value="1"/>
</dbReference>
<dbReference type="SUPFAM" id="SSF51395">
    <property type="entry name" value="FMN-linked oxidoreductases"/>
    <property type="match status" value="1"/>
</dbReference>
<dbReference type="SUPFAM" id="SSF56235">
    <property type="entry name" value="N-terminal nucleophile aminohydrolases (Ntn hydrolases)"/>
    <property type="match status" value="1"/>
</dbReference>
<dbReference type="PROSITE" id="PS51278">
    <property type="entry name" value="GATASE_TYPE_2"/>
    <property type="match status" value="1"/>
</dbReference>